<reference key="1">
    <citation type="journal article" date="2007" name="PLoS ONE">
        <title>Analysis of the neurotoxin complex genes in Clostridium botulinum A1-A4 and B1 strains: BoNT/A3, /Ba4 and /B1 clusters are located within plasmids.</title>
        <authorList>
            <person name="Smith T.J."/>
            <person name="Hill K.K."/>
            <person name="Foley B.T."/>
            <person name="Detter J.C."/>
            <person name="Munk A.C."/>
            <person name="Bruce D.C."/>
            <person name="Doggett N.A."/>
            <person name="Smith L.A."/>
            <person name="Marks J.D."/>
            <person name="Xie G."/>
            <person name="Brettin T.S."/>
        </authorList>
    </citation>
    <scope>NUCLEOTIDE SEQUENCE [LARGE SCALE GENOMIC DNA]</scope>
    <source>
        <strain>Okra / Type B1</strain>
    </source>
</reference>
<sequence length="223" mass="24939">MGQKVHPHGLRVGVIKEWDAKWYADKKNFADNLVEDHKIRNFVKKNSYAAGVSRIEIERAAKRIKLNIYTAKPGMIIGKGGQGIESLKNKLQKIVSNKNILINIVEVKRPEADAQLIAENIAQQLEKRIAFRRAMKQSIQRAMKSGVKGIKTACSGRLGGAEIARTEHYNEGTIPLQTLRADIDYGFAEADTTYGKIGVKVWVYKGEVLPARKNINEKEEANA</sequence>
<comment type="function">
    <text evidence="1">Binds the lower part of the 30S subunit head. Binds mRNA in the 70S ribosome, positioning it for translation.</text>
</comment>
<comment type="subunit">
    <text evidence="1">Part of the 30S ribosomal subunit. Forms a tight complex with proteins S10 and S14.</text>
</comment>
<comment type="similarity">
    <text evidence="1">Belongs to the universal ribosomal protein uS3 family.</text>
</comment>
<name>RS3_CLOBK</name>
<proteinExistence type="inferred from homology"/>
<dbReference type="EMBL" id="CP000939">
    <property type="protein sequence ID" value="ACA45711.1"/>
    <property type="molecule type" value="Genomic_DNA"/>
</dbReference>
<dbReference type="RefSeq" id="WP_003404494.1">
    <property type="nucleotide sequence ID" value="NC_010516.1"/>
</dbReference>
<dbReference type="SMR" id="B1IGE8"/>
<dbReference type="KEGG" id="cbb:CLD_1030"/>
<dbReference type="HOGENOM" id="CLU_058591_0_2_9"/>
<dbReference type="Proteomes" id="UP000008541">
    <property type="component" value="Chromosome"/>
</dbReference>
<dbReference type="GO" id="GO:0022627">
    <property type="term" value="C:cytosolic small ribosomal subunit"/>
    <property type="evidence" value="ECO:0007669"/>
    <property type="project" value="TreeGrafter"/>
</dbReference>
<dbReference type="GO" id="GO:0003729">
    <property type="term" value="F:mRNA binding"/>
    <property type="evidence" value="ECO:0007669"/>
    <property type="project" value="UniProtKB-UniRule"/>
</dbReference>
<dbReference type="GO" id="GO:0019843">
    <property type="term" value="F:rRNA binding"/>
    <property type="evidence" value="ECO:0007669"/>
    <property type="project" value="UniProtKB-UniRule"/>
</dbReference>
<dbReference type="GO" id="GO:0003735">
    <property type="term" value="F:structural constituent of ribosome"/>
    <property type="evidence" value="ECO:0007669"/>
    <property type="project" value="InterPro"/>
</dbReference>
<dbReference type="GO" id="GO:0006412">
    <property type="term" value="P:translation"/>
    <property type="evidence" value="ECO:0007669"/>
    <property type="project" value="UniProtKB-UniRule"/>
</dbReference>
<dbReference type="CDD" id="cd02412">
    <property type="entry name" value="KH-II_30S_S3"/>
    <property type="match status" value="1"/>
</dbReference>
<dbReference type="FunFam" id="3.30.1140.32:FF:000002">
    <property type="entry name" value="30S ribosomal protein S3"/>
    <property type="match status" value="1"/>
</dbReference>
<dbReference type="FunFam" id="3.30.300.20:FF:000001">
    <property type="entry name" value="30S ribosomal protein S3"/>
    <property type="match status" value="1"/>
</dbReference>
<dbReference type="Gene3D" id="3.30.300.20">
    <property type="match status" value="1"/>
</dbReference>
<dbReference type="Gene3D" id="3.30.1140.32">
    <property type="entry name" value="Ribosomal protein S3, C-terminal domain"/>
    <property type="match status" value="1"/>
</dbReference>
<dbReference type="HAMAP" id="MF_01309_B">
    <property type="entry name" value="Ribosomal_uS3_B"/>
    <property type="match status" value="1"/>
</dbReference>
<dbReference type="InterPro" id="IPR004087">
    <property type="entry name" value="KH_dom"/>
</dbReference>
<dbReference type="InterPro" id="IPR015946">
    <property type="entry name" value="KH_dom-like_a/b"/>
</dbReference>
<dbReference type="InterPro" id="IPR004044">
    <property type="entry name" value="KH_dom_type_2"/>
</dbReference>
<dbReference type="InterPro" id="IPR009019">
    <property type="entry name" value="KH_sf_prok-type"/>
</dbReference>
<dbReference type="InterPro" id="IPR036419">
    <property type="entry name" value="Ribosomal_S3_C_sf"/>
</dbReference>
<dbReference type="InterPro" id="IPR005704">
    <property type="entry name" value="Ribosomal_uS3_bac-typ"/>
</dbReference>
<dbReference type="InterPro" id="IPR001351">
    <property type="entry name" value="Ribosomal_uS3_C"/>
</dbReference>
<dbReference type="InterPro" id="IPR018280">
    <property type="entry name" value="Ribosomal_uS3_CS"/>
</dbReference>
<dbReference type="NCBIfam" id="TIGR01009">
    <property type="entry name" value="rpsC_bact"/>
    <property type="match status" value="1"/>
</dbReference>
<dbReference type="PANTHER" id="PTHR11760">
    <property type="entry name" value="30S/40S RIBOSOMAL PROTEIN S3"/>
    <property type="match status" value="1"/>
</dbReference>
<dbReference type="PANTHER" id="PTHR11760:SF19">
    <property type="entry name" value="SMALL RIBOSOMAL SUBUNIT PROTEIN US3C"/>
    <property type="match status" value="1"/>
</dbReference>
<dbReference type="Pfam" id="PF07650">
    <property type="entry name" value="KH_2"/>
    <property type="match status" value="1"/>
</dbReference>
<dbReference type="Pfam" id="PF00189">
    <property type="entry name" value="Ribosomal_S3_C"/>
    <property type="match status" value="1"/>
</dbReference>
<dbReference type="SMART" id="SM00322">
    <property type="entry name" value="KH"/>
    <property type="match status" value="1"/>
</dbReference>
<dbReference type="SUPFAM" id="SSF54814">
    <property type="entry name" value="Prokaryotic type KH domain (KH-domain type II)"/>
    <property type="match status" value="1"/>
</dbReference>
<dbReference type="SUPFAM" id="SSF54821">
    <property type="entry name" value="Ribosomal protein S3 C-terminal domain"/>
    <property type="match status" value="1"/>
</dbReference>
<dbReference type="PROSITE" id="PS50823">
    <property type="entry name" value="KH_TYPE_2"/>
    <property type="match status" value="1"/>
</dbReference>
<dbReference type="PROSITE" id="PS00548">
    <property type="entry name" value="RIBOSOMAL_S3"/>
    <property type="match status" value="1"/>
</dbReference>
<accession>B1IGE8</accession>
<organism>
    <name type="scientific">Clostridium botulinum (strain Okra / Type B1)</name>
    <dbReference type="NCBI Taxonomy" id="498213"/>
    <lineage>
        <taxon>Bacteria</taxon>
        <taxon>Bacillati</taxon>
        <taxon>Bacillota</taxon>
        <taxon>Clostridia</taxon>
        <taxon>Eubacteriales</taxon>
        <taxon>Clostridiaceae</taxon>
        <taxon>Clostridium</taxon>
    </lineage>
</organism>
<keyword id="KW-0687">Ribonucleoprotein</keyword>
<keyword id="KW-0689">Ribosomal protein</keyword>
<keyword id="KW-0694">RNA-binding</keyword>
<keyword id="KW-0699">rRNA-binding</keyword>
<feature type="chain" id="PRO_1000140945" description="Small ribosomal subunit protein uS3">
    <location>
        <begin position="1"/>
        <end position="223"/>
    </location>
</feature>
<feature type="domain" description="KH type-2" evidence="1">
    <location>
        <begin position="39"/>
        <end position="108"/>
    </location>
</feature>
<gene>
    <name evidence="1" type="primary">rpsC</name>
    <name type="ordered locus">CLD_1030</name>
</gene>
<protein>
    <recommendedName>
        <fullName evidence="1">Small ribosomal subunit protein uS3</fullName>
    </recommendedName>
    <alternativeName>
        <fullName evidence="2">30S ribosomal protein S3</fullName>
    </alternativeName>
</protein>
<evidence type="ECO:0000255" key="1">
    <source>
        <dbReference type="HAMAP-Rule" id="MF_01309"/>
    </source>
</evidence>
<evidence type="ECO:0000305" key="2"/>